<gene>
    <name evidence="7" type="primary">foxp4</name>
</gene>
<comment type="function">
    <text evidence="2">Transcriptional repressor.</text>
</comment>
<comment type="subunit">
    <text evidence="2">Dimerization is required for DNA-binding.</text>
</comment>
<comment type="subcellular location">
    <subcellularLocation>
        <location evidence="3 8">Nucleus</location>
    </subcellularLocation>
</comment>
<comment type="tissue specificity">
    <text evidence="6">First expressed in the anterior neural field of stage 15 embryos. At stage 18, localized in three domains of the brain (rostral forebrain, midbrain and hindbrain) and in the eye anlage. Cerebral and retinal expression persists at later stages with additional expression in the branchial arches, at the base of the hatching gland, and in the pancreas.</text>
</comment>
<comment type="developmental stage">
    <text evidence="6">Expressed both maternally and zygotically. Maternal expression is weak but still detectable at the blastula stage. Zygotic expression starts during gastrulation and progresses to strong expression at stages 30 and 45.</text>
</comment>
<comment type="domain">
    <text evidence="2">The leucine-zipper is required for dimerization and transcriptional repression.</text>
</comment>
<proteinExistence type="evidence at transcript level"/>
<name>FOXP4_XENLA</name>
<keyword id="KW-0238">DNA-binding</keyword>
<keyword id="KW-0479">Metal-binding</keyword>
<keyword id="KW-0539">Nucleus</keyword>
<keyword id="KW-1185">Reference proteome</keyword>
<keyword id="KW-0678">Repressor</keyword>
<keyword id="KW-0804">Transcription</keyword>
<keyword id="KW-0805">Transcription regulation</keyword>
<keyword id="KW-0862">Zinc</keyword>
<keyword id="KW-0863">Zinc-finger</keyword>
<dbReference type="EMBL" id="AJ971477">
    <property type="protein sequence ID" value="CAI96565.1"/>
    <property type="molecule type" value="mRNA"/>
</dbReference>
<dbReference type="EMBL" id="AJ971478">
    <property type="protein sequence ID" value="CAI96566.1"/>
    <property type="molecule type" value="mRNA"/>
</dbReference>
<dbReference type="EMBL" id="AJ971479">
    <property type="protein sequence ID" value="CAI96567.1"/>
    <property type="molecule type" value="mRNA"/>
</dbReference>
<dbReference type="EMBL" id="BC124940">
    <property type="protein sequence ID" value="AAI24941.1"/>
    <property type="molecule type" value="mRNA"/>
</dbReference>
<dbReference type="RefSeq" id="XP_018103930.1">
    <property type="nucleotide sequence ID" value="XM_018248441.1"/>
</dbReference>
<dbReference type="SMR" id="Q4VYR7"/>
<dbReference type="DNASU" id="733240"/>
<dbReference type="KEGG" id="xla:733240"/>
<dbReference type="AGR" id="Xenbase:XB-GENE-982697"/>
<dbReference type="CTD" id="733240"/>
<dbReference type="Xenbase" id="XB-GENE-982697">
    <property type="gene designation" value="foxp4.S"/>
</dbReference>
<dbReference type="OrthoDB" id="5830876at2759"/>
<dbReference type="Proteomes" id="UP000186698">
    <property type="component" value="Chromosome 2S"/>
</dbReference>
<dbReference type="Bgee" id="733240">
    <property type="expression patterns" value="Expressed in lung and 18 other cell types or tissues"/>
</dbReference>
<dbReference type="GO" id="GO:0005634">
    <property type="term" value="C:nucleus"/>
    <property type="evidence" value="ECO:0000318"/>
    <property type="project" value="GO_Central"/>
</dbReference>
<dbReference type="GO" id="GO:0003677">
    <property type="term" value="F:DNA binding"/>
    <property type="evidence" value="ECO:0000250"/>
    <property type="project" value="UniProtKB"/>
</dbReference>
<dbReference type="GO" id="GO:0001227">
    <property type="term" value="F:DNA-binding transcription repressor activity, RNA polymerase II-specific"/>
    <property type="evidence" value="ECO:0000318"/>
    <property type="project" value="GO_Central"/>
</dbReference>
<dbReference type="GO" id="GO:0000978">
    <property type="term" value="F:RNA polymerase II cis-regulatory region sequence-specific DNA binding"/>
    <property type="evidence" value="ECO:0000318"/>
    <property type="project" value="GO_Central"/>
</dbReference>
<dbReference type="GO" id="GO:0008270">
    <property type="term" value="F:zinc ion binding"/>
    <property type="evidence" value="ECO:0007669"/>
    <property type="project" value="UniProtKB-KW"/>
</dbReference>
<dbReference type="GO" id="GO:0045892">
    <property type="term" value="P:negative regulation of DNA-templated transcription"/>
    <property type="evidence" value="ECO:0000250"/>
    <property type="project" value="UniProtKB"/>
</dbReference>
<dbReference type="GO" id="GO:0000122">
    <property type="term" value="P:negative regulation of transcription by RNA polymerase II"/>
    <property type="evidence" value="ECO:0000250"/>
    <property type="project" value="UniProtKB"/>
</dbReference>
<dbReference type="GO" id="GO:0006357">
    <property type="term" value="P:regulation of transcription by RNA polymerase II"/>
    <property type="evidence" value="ECO:0000318"/>
    <property type="project" value="GO_Central"/>
</dbReference>
<dbReference type="CDD" id="cd20067">
    <property type="entry name" value="FH_FOXP4"/>
    <property type="match status" value="1"/>
</dbReference>
<dbReference type="FunFam" id="1.20.5.340:FF:000005">
    <property type="entry name" value="Forkhead box P1, isoform CRA_f"/>
    <property type="match status" value="1"/>
</dbReference>
<dbReference type="FunFam" id="1.10.10.10:FF:000010">
    <property type="entry name" value="Forkhead box P2 isoform B"/>
    <property type="match status" value="1"/>
</dbReference>
<dbReference type="Gene3D" id="1.20.5.340">
    <property type="match status" value="1"/>
</dbReference>
<dbReference type="Gene3D" id="1.10.10.10">
    <property type="entry name" value="Winged helix-like DNA-binding domain superfamily/Winged helix DNA-binding domain"/>
    <property type="match status" value="1"/>
</dbReference>
<dbReference type="InterPro" id="IPR047414">
    <property type="entry name" value="FH_FOXP4"/>
</dbReference>
<dbReference type="InterPro" id="IPR001766">
    <property type="entry name" value="Fork_head_dom"/>
</dbReference>
<dbReference type="InterPro" id="IPR050998">
    <property type="entry name" value="FOXP"/>
</dbReference>
<dbReference type="InterPro" id="IPR032354">
    <property type="entry name" value="FOXP-CC"/>
</dbReference>
<dbReference type="InterPro" id="IPR030456">
    <property type="entry name" value="TF_fork_head_CS_2"/>
</dbReference>
<dbReference type="InterPro" id="IPR036388">
    <property type="entry name" value="WH-like_DNA-bd_sf"/>
</dbReference>
<dbReference type="InterPro" id="IPR036390">
    <property type="entry name" value="WH_DNA-bd_sf"/>
</dbReference>
<dbReference type="PANTHER" id="PTHR45796">
    <property type="entry name" value="FORKHEAD BOX P, ISOFORM C"/>
    <property type="match status" value="1"/>
</dbReference>
<dbReference type="PANTHER" id="PTHR45796:SF7">
    <property type="entry name" value="FORKHEAD BOX PROTEIN P4"/>
    <property type="match status" value="1"/>
</dbReference>
<dbReference type="Pfam" id="PF00250">
    <property type="entry name" value="Forkhead"/>
    <property type="match status" value="1"/>
</dbReference>
<dbReference type="Pfam" id="PF16159">
    <property type="entry name" value="FOXP-CC"/>
    <property type="match status" value="1"/>
</dbReference>
<dbReference type="PRINTS" id="PR00053">
    <property type="entry name" value="FORKHEAD"/>
</dbReference>
<dbReference type="SMART" id="SM00339">
    <property type="entry name" value="FH"/>
    <property type="match status" value="1"/>
</dbReference>
<dbReference type="SUPFAM" id="SSF46785">
    <property type="entry name" value="Winged helix' DNA-binding domain"/>
    <property type="match status" value="1"/>
</dbReference>
<dbReference type="PROSITE" id="PS00658">
    <property type="entry name" value="FORK_HEAD_2"/>
    <property type="match status" value="1"/>
</dbReference>
<dbReference type="PROSITE" id="PS50039">
    <property type="entry name" value="FORK_HEAD_3"/>
    <property type="match status" value="1"/>
</dbReference>
<dbReference type="PROSITE" id="PS00028">
    <property type="entry name" value="ZINC_FINGER_C2H2_1"/>
    <property type="match status" value="1"/>
</dbReference>
<reference evidence="8 9" key="1">
    <citation type="journal article" date="2006" name="Dev. Genes Evol.">
        <title>The FoxP subclass in Xenopus laevis development.</title>
        <authorList>
            <person name="Schoen C."/>
            <person name="Wochnik A."/>
            <person name="Roessner A."/>
            <person name="Donow C."/>
            <person name="Knoechel W."/>
        </authorList>
    </citation>
    <scope>NUCLEOTIDE SEQUENCE [MRNA]</scope>
    <scope>TISSUE SPECIFICITY</scope>
    <scope>DEVELOPMENTAL STAGE</scope>
    <source>
        <tissue evidence="6">Tadpole</tissue>
    </source>
</reference>
<reference key="2">
    <citation type="submission" date="2006-10" db="EMBL/GenBank/DDBJ databases">
        <authorList>
            <consortium name="NIH - Xenopus Gene Collection (XGC) project"/>
        </authorList>
    </citation>
    <scope>NUCLEOTIDE SEQUENCE [LARGE SCALE MRNA]</scope>
    <source>
        <tissue>Neurula</tissue>
    </source>
</reference>
<organism>
    <name type="scientific">Xenopus laevis</name>
    <name type="common">African clawed frog</name>
    <dbReference type="NCBI Taxonomy" id="8355"/>
    <lineage>
        <taxon>Eukaryota</taxon>
        <taxon>Metazoa</taxon>
        <taxon>Chordata</taxon>
        <taxon>Craniata</taxon>
        <taxon>Vertebrata</taxon>
        <taxon>Euteleostomi</taxon>
        <taxon>Amphibia</taxon>
        <taxon>Batrachia</taxon>
        <taxon>Anura</taxon>
        <taxon>Pipoidea</taxon>
        <taxon>Pipidae</taxon>
        <taxon>Xenopodinae</taxon>
        <taxon>Xenopus</taxon>
        <taxon>Xenopus</taxon>
    </lineage>
</organism>
<protein>
    <recommendedName>
        <fullName>Forkhead box protein P4</fullName>
    </recommendedName>
    <alternativeName>
        <fullName>XlFoxP4</fullName>
    </alternativeName>
</protein>
<feature type="chain" id="PRO_0000247654" description="Forkhead box protein P4">
    <location>
        <begin position="1"/>
        <end position="641"/>
    </location>
</feature>
<feature type="zinc finger region" description="C2H2-type" evidence="3">
    <location>
        <begin position="278"/>
        <end position="303"/>
    </location>
</feature>
<feature type="DNA-binding region" description="Fork-head" evidence="4">
    <location>
        <begin position="436"/>
        <end position="526"/>
    </location>
</feature>
<feature type="region of interest" description="Disordered" evidence="5">
    <location>
        <begin position="1"/>
        <end position="43"/>
    </location>
</feature>
<feature type="region of interest" description="Disordered" evidence="5">
    <location>
        <begin position="239"/>
        <end position="264"/>
    </location>
</feature>
<feature type="region of interest" description="Leucine-zipper">
    <location>
        <begin position="320"/>
        <end position="341"/>
    </location>
</feature>
<feature type="region of interest" description="ctbp1-binding" evidence="1">
    <location>
        <begin position="354"/>
        <end position="358"/>
    </location>
</feature>
<feature type="region of interest" description="Disordered" evidence="5">
    <location>
        <begin position="563"/>
        <end position="641"/>
    </location>
</feature>
<feature type="compositionally biased region" description="Polar residues" evidence="5">
    <location>
        <begin position="8"/>
        <end position="27"/>
    </location>
</feature>
<feature type="compositionally biased region" description="Polar residues" evidence="5">
    <location>
        <begin position="239"/>
        <end position="259"/>
    </location>
</feature>
<feature type="compositionally biased region" description="Polar residues" evidence="5">
    <location>
        <begin position="576"/>
        <end position="599"/>
    </location>
</feature>
<feature type="compositionally biased region" description="Basic and acidic residues" evidence="5">
    <location>
        <begin position="600"/>
        <end position="611"/>
    </location>
</feature>
<feature type="compositionally biased region" description="Acidic residues" evidence="5">
    <location>
        <begin position="629"/>
        <end position="641"/>
    </location>
</feature>
<feature type="sequence conflict" description="In Ref. 1; CAI96566 and 2; AAI24941." evidence="8" ref="1 2">
    <original>C</original>
    <variation>G</variation>
    <location>
        <position position="70"/>
    </location>
</feature>
<sequence>MMVESESIRSTPTSQNGVGSLPNQSDSCVGREGSGSGETNGELNPAELLHFQQQQALQMARQLLLQQATCLNSPSTDNKQPSVQVPVSVAMMSPQMITPQQMQQILSPAQLQAVLQQQQALMLQQLQEYYKKQQEQLHLQLLSQQQAGKQQPKELALGNKQLAFQQQLLQMQQLQQQHLINLQRQNLVGLQSGQGPVPMQSLPQVSPSDLHQLLKEMSSSQEESSKQDTVDLMTSITTSFPTTKVSPPTMHPSLSNGQNTRRESTSHYESSHLLYGHGECRWPGCEALCEDMGQFIKHLNTEHALDDRSTAQCRVQMQVVQQLEIQLAKESERLQAMMTHLHMRPSEPKPFSQPLNLVSSASNNKMSHDTFPDGLPQPPTSATAPITPLRQGTSVISSSSLPSVGPVRRRIVDKFCTPISSELAQNHEFYKNAEVRPPFTYASLIRQAILETPDRQLTLNEIYNWFTRMFAYFRRNTATWKNAVRHNLSLHKCFVRVENVKGAVWTVDELEYQKRRPPKMTGSPTLVKNMISGLGYSALNASYQAALAESSFPLLNSPPLHNSSGSVLHGGHDDVTSTGEPGNSNGSSPRLSPQYSQSIHVKEEPAEDDVRPASISAPTNQTTVLPEDRDLESESPMEDLP</sequence>
<accession>Q4VYR7</accession>
<accession>Q08AZ6</accession>
<accession>Q4VYR8</accession>
<evidence type="ECO:0000250" key="1">
    <source>
        <dbReference type="UniProtKB" id="P58462"/>
    </source>
</evidence>
<evidence type="ECO:0000250" key="2">
    <source>
        <dbReference type="UniProtKB" id="Q9DBY0"/>
    </source>
</evidence>
<evidence type="ECO:0000255" key="3"/>
<evidence type="ECO:0000255" key="4">
    <source>
        <dbReference type="PROSITE-ProRule" id="PRU00089"/>
    </source>
</evidence>
<evidence type="ECO:0000256" key="5">
    <source>
        <dbReference type="SAM" id="MobiDB-lite"/>
    </source>
</evidence>
<evidence type="ECO:0000269" key="6">
    <source>
    </source>
</evidence>
<evidence type="ECO:0000303" key="7">
    <source>
    </source>
</evidence>
<evidence type="ECO:0000305" key="8"/>
<evidence type="ECO:0000312" key="9">
    <source>
        <dbReference type="EMBL" id="CAI96566.1"/>
    </source>
</evidence>